<organism>
    <name type="scientific">Pisum sativum</name>
    <name type="common">Garden pea</name>
    <name type="synonym">Lathyrus oleraceus</name>
    <dbReference type="NCBI Taxonomy" id="3888"/>
    <lineage>
        <taxon>Eukaryota</taxon>
        <taxon>Viridiplantae</taxon>
        <taxon>Streptophyta</taxon>
        <taxon>Embryophyta</taxon>
        <taxon>Tracheophyta</taxon>
        <taxon>Spermatophyta</taxon>
        <taxon>Magnoliopsida</taxon>
        <taxon>eudicotyledons</taxon>
        <taxon>Gunneridae</taxon>
        <taxon>Pentapetalae</taxon>
        <taxon>rosids</taxon>
        <taxon>fabids</taxon>
        <taxon>Fabales</taxon>
        <taxon>Fabaceae</taxon>
        <taxon>Papilionoideae</taxon>
        <taxon>50 kb inversion clade</taxon>
        <taxon>NPAAA clade</taxon>
        <taxon>Hologalegina</taxon>
        <taxon>IRL clade</taxon>
        <taxon>Fabeae</taxon>
        <taxon>Pisum</taxon>
    </lineage>
</organism>
<name>ATPG_PEA</name>
<dbReference type="EMBL" id="X63604">
    <property type="protein sequence ID" value="CAA45150.1"/>
    <property type="molecule type" value="mRNA"/>
</dbReference>
<dbReference type="PIR" id="S27976">
    <property type="entry name" value="S27976"/>
</dbReference>
<dbReference type="SMR" id="P28552"/>
<dbReference type="GO" id="GO:0009535">
    <property type="term" value="C:chloroplast thylakoid membrane"/>
    <property type="evidence" value="ECO:0007669"/>
    <property type="project" value="UniProtKB-SubCell"/>
</dbReference>
<dbReference type="GO" id="GO:0045259">
    <property type="term" value="C:proton-transporting ATP synthase complex"/>
    <property type="evidence" value="ECO:0007669"/>
    <property type="project" value="UniProtKB-KW"/>
</dbReference>
<dbReference type="GO" id="GO:0046933">
    <property type="term" value="F:proton-transporting ATP synthase activity, rotational mechanism"/>
    <property type="evidence" value="ECO:0007669"/>
    <property type="project" value="InterPro"/>
</dbReference>
<dbReference type="CDD" id="cd12151">
    <property type="entry name" value="F1-ATPase_gamma"/>
    <property type="match status" value="1"/>
</dbReference>
<dbReference type="FunFam" id="1.10.287.80:FF:000003">
    <property type="entry name" value="ATP synthase gamma chain, chloroplastic"/>
    <property type="match status" value="1"/>
</dbReference>
<dbReference type="FunFam" id="1.10.287.80:FF:000004">
    <property type="entry name" value="ATP synthase gamma chain, chloroplastic"/>
    <property type="match status" value="1"/>
</dbReference>
<dbReference type="FunFam" id="3.40.1380.10:FF:000004">
    <property type="entry name" value="ATP synthase gamma chain, chloroplastic"/>
    <property type="match status" value="1"/>
</dbReference>
<dbReference type="Gene3D" id="3.40.1380.10">
    <property type="match status" value="1"/>
</dbReference>
<dbReference type="Gene3D" id="1.10.287.80">
    <property type="entry name" value="ATP synthase, gamma subunit, helix hairpin domain"/>
    <property type="match status" value="2"/>
</dbReference>
<dbReference type="HAMAP" id="MF_00815">
    <property type="entry name" value="ATP_synth_gamma_bact"/>
    <property type="match status" value="1"/>
</dbReference>
<dbReference type="InterPro" id="IPR035968">
    <property type="entry name" value="ATP_synth_F1_ATPase_gsu"/>
</dbReference>
<dbReference type="InterPro" id="IPR000131">
    <property type="entry name" value="ATP_synth_F1_gsu"/>
</dbReference>
<dbReference type="NCBIfam" id="TIGR01146">
    <property type="entry name" value="ATPsyn_F1gamma"/>
    <property type="match status" value="1"/>
</dbReference>
<dbReference type="NCBIfam" id="NF004145">
    <property type="entry name" value="PRK05621.1-2"/>
    <property type="match status" value="1"/>
</dbReference>
<dbReference type="PANTHER" id="PTHR11693">
    <property type="entry name" value="ATP SYNTHASE GAMMA CHAIN"/>
    <property type="match status" value="1"/>
</dbReference>
<dbReference type="PANTHER" id="PTHR11693:SF41">
    <property type="entry name" value="ATP SYNTHASE GAMMA CHAIN, CHLOROPLASTIC"/>
    <property type="match status" value="1"/>
</dbReference>
<dbReference type="Pfam" id="PF00231">
    <property type="entry name" value="ATP-synt"/>
    <property type="match status" value="1"/>
</dbReference>
<dbReference type="PRINTS" id="PR00126">
    <property type="entry name" value="ATPASEGAMMA"/>
</dbReference>
<dbReference type="SUPFAM" id="SSF52943">
    <property type="entry name" value="ATP synthase (F1-ATPase), gamma subunit"/>
    <property type="match status" value="1"/>
</dbReference>
<feature type="transit peptide" description="Chloroplast" evidence="1">
    <location>
        <begin position="1"/>
        <end position="52"/>
    </location>
</feature>
<feature type="chain" id="PRO_0000002678" description="ATP synthase gamma chain, chloroplastic">
    <location>
        <begin position="53"/>
        <end position="376"/>
    </location>
</feature>
<feature type="active site" evidence="1">
    <location>
        <position position="133"/>
    </location>
</feature>
<feature type="disulfide bond" evidence="1">
    <location>
        <begin position="250"/>
        <end position="256"/>
    </location>
</feature>
<comment type="function">
    <text>Produces ATP from ADP in the presence of a proton gradient across the membrane. The gamma chain is believed to be important in regulating ATPase activity and the flow of protons through the CF(0) complex.</text>
</comment>
<comment type="subunit">
    <text evidence="1">F-type ATPases have 2 components, CF(1) - the catalytic core - and CF(0) - the membrane proton channel. CF(1) has five subunits: alpha(3), beta(3), gamma(1), delta(1), epsilon(1). CF(0) has four main subunits: a, b, b' and c (By similarity).</text>
</comment>
<comment type="subcellular location">
    <subcellularLocation>
        <location evidence="1">Plastid</location>
        <location evidence="1">Chloroplast thylakoid membrane</location>
        <topology evidence="1">Peripheral membrane protein</topology>
    </subcellularLocation>
</comment>
<comment type="similarity">
    <text evidence="2">Belongs to the ATPase gamma chain family.</text>
</comment>
<keyword id="KW-0066">ATP synthesis</keyword>
<keyword id="KW-0139">CF(1)</keyword>
<keyword id="KW-0150">Chloroplast</keyword>
<keyword id="KW-1015">Disulfide bond</keyword>
<keyword id="KW-0375">Hydrogen ion transport</keyword>
<keyword id="KW-0406">Ion transport</keyword>
<keyword id="KW-0472">Membrane</keyword>
<keyword id="KW-0934">Plastid</keyword>
<keyword id="KW-0793">Thylakoid</keyword>
<keyword id="KW-0809">Transit peptide</keyword>
<keyword id="KW-0813">Transport</keyword>
<evidence type="ECO:0000250" key="1"/>
<evidence type="ECO:0000305" key="2"/>
<protein>
    <recommendedName>
        <fullName>ATP synthase gamma chain, chloroplastic</fullName>
    </recommendedName>
    <alternativeName>
        <fullName>F-ATPase gamma subunit</fullName>
    </alternativeName>
</protein>
<reference key="1">
    <citation type="journal article" date="1992" name="Plant Mol. Biol.">
        <title>Chloroplast import of the precursor of the gamma subunit of pea chloroplast ATP synthase.</title>
        <authorList>
            <person name="Napier J.A."/>
            <person name="Hglund A.S."/>
            <person name="Plant A.L."/>
            <person name="Gray J.C."/>
        </authorList>
    </citation>
    <scope>NUCLEOTIDE SEQUENCE [MRNA]</scope>
</reference>
<accession>P28552</accession>
<proteinExistence type="evidence at transcript level"/>
<gene>
    <name type="primary">ATPC</name>
</gene>
<sequence length="376" mass="41411">MSCSNVTMLVSSKPSLPDASNLSFRSAFNPFQLPSQNSSSSCTPSRPTSIQCGLKDLKNRIDSVKNTQKITEAMKLVAAAKVRRAQEAVVNGRPFSETLVEVLYSINEQLQTDDIESPLTKLRPVKKVALVVCTGDRGLCGGFNNAILKKAEARIAELKELGLEYTVVSVGRKGNSYFNRRPYIPVDRFLEGGSLPTAKEAQTIADDVFSLFVSEEVDKVELLYTKFVSLVKSNPIIHTLLPLSPKGEICDINGNCVDAAEDELFRLTTKEGKLTVERDVIRSKTVDFSPILQFEQDPVQILDALLPLYLNSQILRPLQESLASELAARMSAMSSAFDNASELKTDLTRVYNRATQAKITGEILEIVAGDIECIIW</sequence>